<keyword id="KW-0027">Amidation</keyword>
<keyword id="KW-0165">Cleavage on pair of basic residues</keyword>
<keyword id="KW-0208">D-amino acid</keyword>
<keyword id="KW-0872">Ion channel impairing toxin</keyword>
<keyword id="KW-0528">Neurotoxin</keyword>
<keyword id="KW-0964">Secreted</keyword>
<keyword id="KW-0732">Signal</keyword>
<keyword id="KW-0800">Toxin</keyword>
<organism>
    <name type="scientific">Conus textile</name>
    <name type="common">Cloth-of-gold cone</name>
    <dbReference type="NCBI Taxonomy" id="6494"/>
    <lineage>
        <taxon>Eukaryota</taxon>
        <taxon>Metazoa</taxon>
        <taxon>Spiralia</taxon>
        <taxon>Lophotrochozoa</taxon>
        <taxon>Mollusca</taxon>
        <taxon>Gastropoda</taxon>
        <taxon>Caenogastropoda</taxon>
        <taxon>Neogastropoda</taxon>
        <taxon>Conoidea</taxon>
        <taxon>Conidae</taxon>
        <taxon>Conus</taxon>
        <taxon>Cylinder</taxon>
    </lineage>
</organism>
<feature type="signal peptide" evidence="5">
    <location>
        <begin position="1"/>
        <end position="23"/>
    </location>
</feature>
<feature type="propeptide" id="PRO_0000035079" evidence="8">
    <location>
        <begin position="24"/>
        <end position="55"/>
    </location>
</feature>
<feature type="peptide" id="PRO_0000035080" description="Leu-contryphan-Tx" evidence="9">
    <location>
        <begin position="56"/>
        <end position="62"/>
    </location>
</feature>
<feature type="region of interest" description="Disordered" evidence="6">
    <location>
        <begin position="24"/>
        <end position="45"/>
    </location>
</feature>
<feature type="compositionally biased region" description="Basic and acidic residues" evidence="6">
    <location>
        <begin position="28"/>
        <end position="39"/>
    </location>
</feature>
<feature type="modified residue" description="D-leucine" evidence="9">
    <location>
        <position position="58"/>
    </location>
</feature>
<feature type="modified residue" description="Cysteine amide" evidence="9">
    <location>
        <position position="62"/>
    </location>
</feature>
<evidence type="ECO:0000250" key="1">
    <source>
        <dbReference type="UniProtKB" id="P0C248"/>
    </source>
</evidence>
<evidence type="ECO:0000250" key="2">
    <source>
        <dbReference type="UniProtKB" id="P0C250"/>
    </source>
</evidence>
<evidence type="ECO:0000250" key="3">
    <source>
        <dbReference type="UniProtKB" id="P62903"/>
    </source>
</evidence>
<evidence type="ECO:0000250" key="4">
    <source>
        <dbReference type="UniProtKB" id="P83047"/>
    </source>
</evidence>
<evidence type="ECO:0000255" key="5"/>
<evidence type="ECO:0000256" key="6">
    <source>
        <dbReference type="SAM" id="MobiDB-lite"/>
    </source>
</evidence>
<evidence type="ECO:0000269" key="7">
    <source>
    </source>
</evidence>
<evidence type="ECO:0000305" key="8"/>
<evidence type="ECO:0000305" key="9">
    <source>
    </source>
</evidence>
<accession>Q9NDA6</accession>
<name>COW3_CONTE</name>
<reference key="1">
    <citation type="journal article" date="2001" name="Toxicon">
        <title>Contryphans from Conus textile venom ducts.</title>
        <authorList>
            <person name="Jimenez E.C."/>
            <person name="Watkins M."/>
            <person name="Juszczak L.J."/>
            <person name="Cruz L.J."/>
            <person name="Olivera B.M."/>
        </authorList>
    </citation>
    <scope>NUCLEOTIDE SEQUENCE [MRNA]</scope>
    <scope>D-AMINO ACID AT LEU-58</scope>
    <scope>AMIDATION AT CYS-62</scope>
    <scope>SYNTHESIS OF 56-62</scope>
    <scope>MASS SPECTROMETRY</scope>
    <source>
        <tissue>Venom duct</tissue>
    </source>
</reference>
<sequence>MGKLTILVLVAAVLLSAQVMVQGDGDQPADRKAVPREDNPGGASGKLMDVLRPKKCVLYPWCG</sequence>
<comment type="function">
    <text evidence="1 2 3 4">Its target is unknown, but this toxin may modulate voltage-activated calcium channels (Cav) or calcium-dependent potassium channels (KCa).</text>
</comment>
<comment type="subcellular location">
    <subcellularLocation>
        <location evidence="9">Secreted</location>
    </subcellularLocation>
</comment>
<comment type="tissue specificity">
    <text evidence="9">Expressed by the venom duct.</text>
</comment>
<comment type="domain">
    <text evidence="8">The cysteine framework is C-C.</text>
</comment>
<comment type="mass spectrometry"/>
<comment type="similarity">
    <text evidence="8">Belongs to the O2 superfamily. Contryphan family.</text>
</comment>
<protein>
    <recommendedName>
        <fullName>Leu-contryphan-Tx</fullName>
    </recommendedName>
</protein>
<dbReference type="EMBL" id="AF166324">
    <property type="protein sequence ID" value="AAF82244.1"/>
    <property type="molecule type" value="mRNA"/>
</dbReference>
<dbReference type="ConoServer" id="1315">
    <property type="toxin name" value="Leu-contryphan-Tx precursor"/>
</dbReference>
<dbReference type="GO" id="GO:0005576">
    <property type="term" value="C:extracellular region"/>
    <property type="evidence" value="ECO:0007669"/>
    <property type="project" value="UniProtKB-SubCell"/>
</dbReference>
<dbReference type="GO" id="GO:0008200">
    <property type="term" value="F:ion channel inhibitor activity"/>
    <property type="evidence" value="ECO:0007669"/>
    <property type="project" value="InterPro"/>
</dbReference>
<dbReference type="GO" id="GO:0090729">
    <property type="term" value="F:toxin activity"/>
    <property type="evidence" value="ECO:0007669"/>
    <property type="project" value="UniProtKB-KW"/>
</dbReference>
<dbReference type="InterPro" id="IPR004214">
    <property type="entry name" value="Conotoxin"/>
</dbReference>
<dbReference type="InterPro" id="IPR011062">
    <property type="entry name" value="Contryphan_CS"/>
</dbReference>
<dbReference type="Pfam" id="PF02950">
    <property type="entry name" value="Conotoxin"/>
    <property type="match status" value="1"/>
</dbReference>
<dbReference type="PROSITE" id="PS60027">
    <property type="entry name" value="CONTRYPHAN"/>
    <property type="match status" value="1"/>
</dbReference>
<proteinExistence type="evidence at protein level"/>